<dbReference type="EMBL" id="CP000647">
    <property type="protein sequence ID" value="ABR76158.1"/>
    <property type="molecule type" value="Genomic_DNA"/>
</dbReference>
<dbReference type="RefSeq" id="WP_004176862.1">
    <property type="nucleotide sequence ID" value="NC_009648.1"/>
</dbReference>
<dbReference type="SMR" id="A6T6D7"/>
<dbReference type="STRING" id="272620.KPN_00715"/>
<dbReference type="PaxDb" id="272620-KPN_00715"/>
<dbReference type="EnsemblBacteria" id="ABR76158">
    <property type="protein sequence ID" value="ABR76158"/>
    <property type="gene ID" value="KPN_00715"/>
</dbReference>
<dbReference type="KEGG" id="kpn:KPN_00715"/>
<dbReference type="HOGENOM" id="CLU_077094_2_0_6"/>
<dbReference type="Proteomes" id="UP000000265">
    <property type="component" value="Chromosome"/>
</dbReference>
<dbReference type="GO" id="GO:0005886">
    <property type="term" value="C:plasma membrane"/>
    <property type="evidence" value="ECO:0007669"/>
    <property type="project" value="UniProtKB-SubCell"/>
</dbReference>
<dbReference type="GO" id="GO:0005524">
    <property type="term" value="F:ATP binding"/>
    <property type="evidence" value="ECO:0007669"/>
    <property type="project" value="UniProtKB-UniRule"/>
</dbReference>
<dbReference type="GO" id="GO:0008556">
    <property type="term" value="F:P-type potassium transmembrane transporter activity"/>
    <property type="evidence" value="ECO:0007669"/>
    <property type="project" value="InterPro"/>
</dbReference>
<dbReference type="HAMAP" id="MF_00276">
    <property type="entry name" value="KdpC"/>
    <property type="match status" value="1"/>
</dbReference>
<dbReference type="InterPro" id="IPR003820">
    <property type="entry name" value="KdpC"/>
</dbReference>
<dbReference type="NCBIfam" id="TIGR00681">
    <property type="entry name" value="kdpC"/>
    <property type="match status" value="1"/>
</dbReference>
<dbReference type="NCBIfam" id="NF001454">
    <property type="entry name" value="PRK00315.1"/>
    <property type="match status" value="1"/>
</dbReference>
<dbReference type="PANTHER" id="PTHR30042">
    <property type="entry name" value="POTASSIUM-TRANSPORTING ATPASE C CHAIN"/>
    <property type="match status" value="1"/>
</dbReference>
<dbReference type="PANTHER" id="PTHR30042:SF2">
    <property type="entry name" value="POTASSIUM-TRANSPORTING ATPASE KDPC SUBUNIT"/>
    <property type="match status" value="1"/>
</dbReference>
<dbReference type="Pfam" id="PF02669">
    <property type="entry name" value="KdpC"/>
    <property type="match status" value="1"/>
</dbReference>
<dbReference type="PIRSF" id="PIRSF001296">
    <property type="entry name" value="K_ATPase_KdpC"/>
    <property type="match status" value="1"/>
</dbReference>
<name>KDPC_KLEP7</name>
<keyword id="KW-0067">ATP-binding</keyword>
<keyword id="KW-0997">Cell inner membrane</keyword>
<keyword id="KW-1003">Cell membrane</keyword>
<keyword id="KW-0406">Ion transport</keyword>
<keyword id="KW-0472">Membrane</keyword>
<keyword id="KW-0547">Nucleotide-binding</keyword>
<keyword id="KW-0630">Potassium</keyword>
<keyword id="KW-0633">Potassium transport</keyword>
<keyword id="KW-0812">Transmembrane</keyword>
<keyword id="KW-1133">Transmembrane helix</keyword>
<keyword id="KW-0813">Transport</keyword>
<evidence type="ECO:0000255" key="1">
    <source>
        <dbReference type="HAMAP-Rule" id="MF_00276"/>
    </source>
</evidence>
<accession>A6T6D7</accession>
<feature type="chain" id="PRO_1000022291" description="Potassium-transporting ATPase KdpC subunit">
    <location>
        <begin position="1"/>
        <end position="191"/>
    </location>
</feature>
<feature type="transmembrane region" description="Helical" evidence="1">
    <location>
        <begin position="6"/>
        <end position="26"/>
    </location>
</feature>
<comment type="function">
    <text evidence="1">Part of the high-affinity ATP-driven potassium transport (or Kdp) system, which catalyzes the hydrolysis of ATP coupled with the electrogenic transport of potassium into the cytoplasm. This subunit acts as a catalytic chaperone that increases the ATP-binding affinity of the ATP-hydrolyzing subunit KdpB by the formation of a transient KdpB/KdpC/ATP ternary complex.</text>
</comment>
<comment type="subunit">
    <text evidence="1">The system is composed of three essential subunits: KdpA, KdpB and KdpC.</text>
</comment>
<comment type="subcellular location">
    <subcellularLocation>
        <location evidence="1">Cell inner membrane</location>
        <topology evidence="1">Single-pass membrane protein</topology>
    </subcellularLocation>
</comment>
<comment type="similarity">
    <text evidence="1">Belongs to the KdpC family.</text>
</comment>
<gene>
    <name evidence="1" type="primary">kdpC</name>
    <name type="ordered locus">KPN78578_06970</name>
    <name type="ORF">KPN_00715</name>
</gene>
<sequence>MSLIRPALVLFILLTLLTGGVYPLLTTSLGQWWFNSQANGSLIRLNGEVRGSALIGQNFTAAGYFQGRPSATAETTDNPMASGGSNLAASNPALDKAVSERVQALRAANPDADPRVPVELVTTSASGLDNNLTPAAALWQVPRVAQARQLSVEQVTQLVNQATQTPLLSFLGQPVVNILQLNMALDALKDK</sequence>
<organism>
    <name type="scientific">Klebsiella pneumoniae subsp. pneumoniae (strain ATCC 700721 / MGH 78578)</name>
    <dbReference type="NCBI Taxonomy" id="272620"/>
    <lineage>
        <taxon>Bacteria</taxon>
        <taxon>Pseudomonadati</taxon>
        <taxon>Pseudomonadota</taxon>
        <taxon>Gammaproteobacteria</taxon>
        <taxon>Enterobacterales</taxon>
        <taxon>Enterobacteriaceae</taxon>
        <taxon>Klebsiella/Raoultella group</taxon>
        <taxon>Klebsiella</taxon>
        <taxon>Klebsiella pneumoniae complex</taxon>
    </lineage>
</organism>
<protein>
    <recommendedName>
        <fullName evidence="1">Potassium-transporting ATPase KdpC subunit</fullName>
    </recommendedName>
    <alternativeName>
        <fullName evidence="1">ATP phosphohydrolase [potassium-transporting] C chain</fullName>
    </alternativeName>
    <alternativeName>
        <fullName evidence="1">Potassium-binding and translocating subunit C</fullName>
    </alternativeName>
    <alternativeName>
        <fullName evidence="1">Potassium-translocating ATPase C chain</fullName>
    </alternativeName>
</protein>
<reference key="1">
    <citation type="submission" date="2006-09" db="EMBL/GenBank/DDBJ databases">
        <authorList>
            <consortium name="The Klebsiella pneumonia Genome Sequencing Project"/>
            <person name="McClelland M."/>
            <person name="Sanderson E.K."/>
            <person name="Spieth J."/>
            <person name="Clifton W.S."/>
            <person name="Latreille P."/>
            <person name="Sabo A."/>
            <person name="Pepin K."/>
            <person name="Bhonagiri V."/>
            <person name="Porwollik S."/>
            <person name="Ali J."/>
            <person name="Wilson R.K."/>
        </authorList>
    </citation>
    <scope>NUCLEOTIDE SEQUENCE [LARGE SCALE GENOMIC DNA]</scope>
    <source>
        <strain>ATCC 700721 / MGH 78578</strain>
    </source>
</reference>
<proteinExistence type="inferred from homology"/>